<proteinExistence type="inferred from homology"/>
<keyword id="KW-0066">ATP synthesis</keyword>
<keyword id="KW-0138">CF(0)</keyword>
<keyword id="KW-0375">Hydrogen ion transport</keyword>
<keyword id="KW-0406">Ion transport</keyword>
<keyword id="KW-0472">Membrane</keyword>
<keyword id="KW-0496">Mitochondrion</keyword>
<keyword id="KW-0999">Mitochondrion inner membrane</keyword>
<keyword id="KW-1185">Reference proteome</keyword>
<keyword id="KW-0812">Transmembrane</keyword>
<keyword id="KW-1133">Transmembrane helix</keyword>
<keyword id="KW-0813">Transport</keyword>
<feature type="propeptide" id="PRO_0000002616" description="Removed in mature form" evidence="1">
    <location>
        <begin position="1"/>
        <end position="14"/>
    </location>
</feature>
<feature type="chain" id="PRO_0000002617" description="ATP synthase subunit a">
    <location>
        <begin position="15"/>
        <end position="261"/>
    </location>
</feature>
<feature type="transmembrane region" description="Helical" evidence="2">
    <location>
        <begin position="38"/>
        <end position="58"/>
    </location>
</feature>
<feature type="transmembrane region" description="Helical" evidence="2">
    <location>
        <begin position="96"/>
        <end position="116"/>
    </location>
</feature>
<feature type="transmembrane region" description="Helical" evidence="2">
    <location>
        <begin position="126"/>
        <end position="146"/>
    </location>
</feature>
<feature type="transmembrane region" description="Helical" evidence="2">
    <location>
        <begin position="153"/>
        <end position="173"/>
    </location>
</feature>
<feature type="transmembrane region" description="Helical" evidence="2">
    <location>
        <begin position="191"/>
        <end position="211"/>
    </location>
</feature>
<feature type="transmembrane region" description="Helical" evidence="2">
    <location>
        <begin position="214"/>
        <end position="234"/>
    </location>
</feature>
<feature type="transmembrane region" description="Helical" evidence="2">
    <location>
        <begin position="235"/>
        <end position="255"/>
    </location>
</feature>
<feature type="sequence conflict" description="In Ref. 1; AAA31964." evidence="3" ref="1">
    <original>A</original>
    <variation>T</variation>
    <location>
        <position position="30"/>
    </location>
</feature>
<feature type="sequence conflict" description="In Ref. 1; AAA31964." evidence="3" ref="1">
    <original>H</original>
    <variation>Y</variation>
    <location>
        <position position="82"/>
    </location>
</feature>
<reference key="1">
    <citation type="journal article" date="1984" name="J. Mol. Biol.">
        <title>Two intervening sequences in the ATPase subunit 6 gene of Neurospora crassa. A short intron (93 base-pairs) and a long intron that is stable after excision.</title>
        <authorList>
            <person name="Morelli G."/>
            <person name="Macino G."/>
        </authorList>
    </citation>
    <scope>NUCLEOTIDE SEQUENCE [GENOMIC DNA]</scope>
    <source>
        <strain>ATCC 24698 / 74-OR23-1A / CBS 708.71 / DSM 1257 / FGSC 987</strain>
    </source>
</reference>
<reference key="2">
    <citation type="journal article" date="1994" name="Curr. Genet.">
        <title>Revision of the nucleotide sequence and RNA splicing pathway of the Neurospora mitochondrial gene encoding ATPase subunit 6.</title>
        <authorList>
            <person name="Collins R.A."/>
            <person name="Olive J.E."/>
        </authorList>
    </citation>
    <scope>NUCLEOTIDE SEQUENCE [GENOMIC DNA]</scope>
    <scope>REVISION OF GENE MODEL</scope>
    <source>
        <strain>ATCC 24698 / 74-OR23-1A / CBS 708.71 / DSM 1257 / FGSC 987</strain>
    </source>
</reference>
<reference key="3">
    <citation type="journal article" date="2003" name="Nature">
        <title>The genome sequence of the filamentous fungus Neurospora crassa.</title>
        <authorList>
            <person name="Galagan J.E."/>
            <person name="Calvo S.E."/>
            <person name="Borkovich K.A."/>
            <person name="Selker E.U."/>
            <person name="Read N.D."/>
            <person name="Jaffe D.B."/>
            <person name="FitzHugh W."/>
            <person name="Ma L.-J."/>
            <person name="Smirnov S."/>
            <person name="Purcell S."/>
            <person name="Rehman B."/>
            <person name="Elkins T."/>
            <person name="Engels R."/>
            <person name="Wang S."/>
            <person name="Nielsen C.B."/>
            <person name="Butler J."/>
            <person name="Endrizzi M."/>
            <person name="Qui D."/>
            <person name="Ianakiev P."/>
            <person name="Bell-Pedersen D."/>
            <person name="Nelson M.A."/>
            <person name="Werner-Washburne M."/>
            <person name="Selitrennikoff C.P."/>
            <person name="Kinsey J.A."/>
            <person name="Braun E.L."/>
            <person name="Zelter A."/>
            <person name="Schulte U."/>
            <person name="Kothe G.O."/>
            <person name="Jedd G."/>
            <person name="Mewes H.-W."/>
            <person name="Staben C."/>
            <person name="Marcotte E."/>
            <person name="Greenberg D."/>
            <person name="Roy A."/>
            <person name="Foley K."/>
            <person name="Naylor J."/>
            <person name="Stange-Thomann N."/>
            <person name="Barrett R."/>
            <person name="Gnerre S."/>
            <person name="Kamal M."/>
            <person name="Kamvysselis M."/>
            <person name="Mauceli E.W."/>
            <person name="Bielke C."/>
            <person name="Rudd S."/>
            <person name="Frishman D."/>
            <person name="Krystofova S."/>
            <person name="Rasmussen C."/>
            <person name="Metzenberg R.L."/>
            <person name="Perkins D.D."/>
            <person name="Kroken S."/>
            <person name="Cogoni C."/>
            <person name="Macino G."/>
            <person name="Catcheside D.E.A."/>
            <person name="Li W."/>
            <person name="Pratt R.J."/>
            <person name="Osmani S.A."/>
            <person name="DeSouza C.P.C."/>
            <person name="Glass N.L."/>
            <person name="Orbach M.J."/>
            <person name="Berglund J.A."/>
            <person name="Voelker R."/>
            <person name="Yarden O."/>
            <person name="Plamann M."/>
            <person name="Seiler S."/>
            <person name="Dunlap J.C."/>
            <person name="Radford A."/>
            <person name="Aramayo R."/>
            <person name="Natvig D.O."/>
            <person name="Alex L.A."/>
            <person name="Mannhaupt G."/>
            <person name="Ebbole D.J."/>
            <person name="Freitag M."/>
            <person name="Paulsen I."/>
            <person name="Sachs M.S."/>
            <person name="Lander E.S."/>
            <person name="Nusbaum C."/>
            <person name="Birren B.W."/>
        </authorList>
    </citation>
    <scope>NUCLEOTIDE SEQUENCE [LARGE SCALE GENOMIC DNA]</scope>
    <source>
        <strain>ATCC 24698 / 74-OR23-1A / CBS 708.71 / DSM 1257 / FGSC 987</strain>
    </source>
</reference>
<reference key="4">
    <citation type="book" date="2004" name="The Mycota II, Genetics and Biotechnology (2nd edition)">
        <title>Mitochondrial genetics of Neurospora.</title>
        <editorList>
            <person name="Kueck U."/>
        </editorList>
        <authorList>
            <person name="Kennell J.C."/>
            <person name="Collins R.A."/>
            <person name="Griffiths A.J.F."/>
            <person name="Nargang F.E."/>
        </authorList>
    </citation>
    <scope>GENOME REANNOTATION</scope>
    <source>
        <strain>ATCC 24698 / 74-OR23-1A / CBS 708.71 / DSM 1257 / FGSC 987</strain>
    </source>
</reference>
<evidence type="ECO:0000250" key="1"/>
<evidence type="ECO:0000255" key="2"/>
<evidence type="ECO:0000305" key="3"/>
<name>ATP6_NEUCR</name>
<organism>
    <name type="scientific">Neurospora crassa (strain ATCC 24698 / 74-OR23-1A / CBS 708.71 / DSM 1257 / FGSC 987)</name>
    <dbReference type="NCBI Taxonomy" id="367110"/>
    <lineage>
        <taxon>Eukaryota</taxon>
        <taxon>Fungi</taxon>
        <taxon>Dikarya</taxon>
        <taxon>Ascomycota</taxon>
        <taxon>Pezizomycotina</taxon>
        <taxon>Sordariomycetes</taxon>
        <taxon>Sordariomycetidae</taxon>
        <taxon>Sordariales</taxon>
        <taxon>Sordariaceae</taxon>
        <taxon>Neurospora</taxon>
    </lineage>
</organism>
<protein>
    <recommendedName>
        <fullName>ATP synthase subunit a</fullName>
    </recommendedName>
    <alternativeName>
        <fullName>F-ATPase protein 6</fullName>
    </alternativeName>
</protein>
<gene>
    <name type="primary">atp-6</name>
    <name type="synonym">oli2</name>
    <name type="ORF">NCM020</name>
    <name type="ORF">NCU16025</name>
</gene>
<dbReference type="EMBL" id="AH001270">
    <property type="protein sequence ID" value="AAA31964.2"/>
    <property type="status" value="ALT_SEQ"/>
    <property type="molecule type" value="Genomic_DNA"/>
</dbReference>
<dbReference type="EMBL" id="L14642">
    <property type="protein sequence ID" value="AAA66053.1"/>
    <property type="molecule type" value="Genomic_DNA"/>
</dbReference>
<dbReference type="EMBL" id="KC683708">
    <property type="protein sequence ID" value="AGG16014.1"/>
    <property type="molecule type" value="Genomic_DNA"/>
</dbReference>
<dbReference type="PIR" id="S44066">
    <property type="entry name" value="S44066"/>
</dbReference>
<dbReference type="PIR" id="T50467">
    <property type="entry name" value="T50467"/>
</dbReference>
<dbReference type="RefSeq" id="YP_009126726.1">
    <property type="nucleotide sequence ID" value="NC_026614.1"/>
</dbReference>
<dbReference type="SMR" id="P37212"/>
<dbReference type="FunCoup" id="P37212">
    <property type="interactions" value="246"/>
</dbReference>
<dbReference type="STRING" id="367110.P37212"/>
<dbReference type="EnsemblFungi" id="AGG16014">
    <property type="protein sequence ID" value="AGG16014"/>
    <property type="gene ID" value="NCU16025"/>
</dbReference>
<dbReference type="GeneID" id="23681580"/>
<dbReference type="KEGG" id="ncr:NCU16025"/>
<dbReference type="VEuPathDB" id="FungiDB:NCU16025"/>
<dbReference type="InParanoid" id="P37212"/>
<dbReference type="OrthoDB" id="5976622at2759"/>
<dbReference type="Proteomes" id="UP000001805">
    <property type="component" value="Mitochondrion"/>
</dbReference>
<dbReference type="GO" id="GO:0005743">
    <property type="term" value="C:mitochondrial inner membrane"/>
    <property type="evidence" value="ECO:0007669"/>
    <property type="project" value="UniProtKB-SubCell"/>
</dbReference>
<dbReference type="GO" id="GO:0045259">
    <property type="term" value="C:proton-transporting ATP synthase complex"/>
    <property type="evidence" value="ECO:0000318"/>
    <property type="project" value="GO_Central"/>
</dbReference>
<dbReference type="GO" id="GO:0015078">
    <property type="term" value="F:proton transmembrane transporter activity"/>
    <property type="evidence" value="ECO:0007669"/>
    <property type="project" value="InterPro"/>
</dbReference>
<dbReference type="GO" id="GO:0015986">
    <property type="term" value="P:proton motive force-driven ATP synthesis"/>
    <property type="evidence" value="ECO:0000318"/>
    <property type="project" value="GO_Central"/>
</dbReference>
<dbReference type="CDD" id="cd00310">
    <property type="entry name" value="ATP-synt_Fo_a_6"/>
    <property type="match status" value="1"/>
</dbReference>
<dbReference type="FunFam" id="1.20.120.220:FF:000003">
    <property type="entry name" value="ATP synthase subunit a"/>
    <property type="match status" value="1"/>
</dbReference>
<dbReference type="Gene3D" id="1.20.120.220">
    <property type="entry name" value="ATP synthase, F0 complex, subunit A"/>
    <property type="match status" value="1"/>
</dbReference>
<dbReference type="HAMAP" id="MF_01393">
    <property type="entry name" value="ATP_synth_a_bact"/>
    <property type="match status" value="1"/>
</dbReference>
<dbReference type="InterPro" id="IPR000568">
    <property type="entry name" value="ATP_synth_F0_asu"/>
</dbReference>
<dbReference type="InterPro" id="IPR023011">
    <property type="entry name" value="ATP_synth_F0_asu_AS"/>
</dbReference>
<dbReference type="InterPro" id="IPR045083">
    <property type="entry name" value="ATP_synth_F0_asu_bact/mt"/>
</dbReference>
<dbReference type="InterPro" id="IPR035908">
    <property type="entry name" value="F0_ATP_A_sf"/>
</dbReference>
<dbReference type="NCBIfam" id="TIGR01131">
    <property type="entry name" value="ATP_synt_6_or_A"/>
    <property type="match status" value="1"/>
</dbReference>
<dbReference type="NCBIfam" id="NF004482">
    <property type="entry name" value="PRK05815.2-4"/>
    <property type="match status" value="1"/>
</dbReference>
<dbReference type="PANTHER" id="PTHR11410">
    <property type="entry name" value="ATP SYNTHASE SUBUNIT A"/>
    <property type="match status" value="1"/>
</dbReference>
<dbReference type="PANTHER" id="PTHR11410:SF0">
    <property type="entry name" value="ATP SYNTHASE SUBUNIT A"/>
    <property type="match status" value="1"/>
</dbReference>
<dbReference type="Pfam" id="PF00119">
    <property type="entry name" value="ATP-synt_A"/>
    <property type="match status" value="1"/>
</dbReference>
<dbReference type="PRINTS" id="PR00123">
    <property type="entry name" value="ATPASEA"/>
</dbReference>
<dbReference type="SUPFAM" id="SSF81336">
    <property type="entry name" value="F1F0 ATP synthase subunit A"/>
    <property type="match status" value="1"/>
</dbReference>
<dbReference type="PROSITE" id="PS00449">
    <property type="entry name" value="ATPASE_A"/>
    <property type="match status" value="1"/>
</dbReference>
<comment type="function">
    <text>Mitochondrial membrane ATP synthase (F(1)F(0) ATP synthase or Complex V) produces ATP from ADP in the presence of a proton gradient across the membrane which is generated by electron transport complexes of the respiratory chain. F-type ATPases consist of two structural domains, F(1) - containing the extramembraneous catalytic core and F(0) - containing the membrane proton channel, linked together by a central stalk and a peripheral stalk. During catalysis, ATP synthesis in the catalytic domain of F(1) is coupled via a rotary mechanism of the central stalk subunits to proton translocation. Key component of the proton channel; it may play a direct role in the translocation of protons across the membrane.</text>
</comment>
<comment type="subunit">
    <text>F-type ATPases have 2 components, CF(1) - the catalytic core - and CF(0) - the membrane proton channel. CF(1) has five subunits: alpha(3), beta(3), gamma(1), delta(1), epsilon(1). CF(0) has three main subunits: a, b and c.</text>
</comment>
<comment type="subcellular location">
    <subcellularLocation>
        <location>Mitochondrion inner membrane</location>
        <topology>Multi-pass membrane protein</topology>
    </subcellularLocation>
</comment>
<comment type="similarity">
    <text evidence="3">Belongs to the ATPase A chain family.</text>
</comment>
<comment type="sequence caution" evidence="3">
    <conflict type="erroneous gene model prediction">
        <sequence resource="EMBL-CDS" id="AAA31964"/>
    </conflict>
</comment>
<geneLocation type="mitochondrion"/>
<sequence>MSTLSFNNISTEVLSPLNQFEIRDLLSIDALGNLHISITNIGFYLTIGAFFFLVINLLSINYNRLVSNSWSISQESLYATIHSIVTSQINPRNGQIYFPFIYTLFIFILINNLIGMVPYSFASTSHFVVTFALSFTIVLGATILGFQKHGLEFFSLLVPAGCPLALLPLLVLIEFISYLARNISLGLRLAANILSGHMLLHILAGFTYNIMTSGIIFFFLGLIPLAFIIAFSGLELGIAFIQAQVFVVLTSGYIKDALDLH</sequence>
<accession>P37212</accession>
<accession>M1RM82</accession>
<accession>Q35133</accession>